<protein>
    <recommendedName>
        <fullName evidence="10">Protein matrimony</fullName>
    </recommendedName>
    <alternativeName>
        <fullName>Cell cycle arrest protein D52</fullName>
    </alternativeName>
</protein>
<comment type="function">
    <text evidence="5 6">Polo kinase inhibitor required to maintain G2 arrest in the meiotic cell cycle in females (PubMed:18052611). Holds heterochromatically paired homologs together from the end of pachytene until metaphase I (PubMed:14573476). Haploinsufficient locus for homologous achiasmate segregation and may be required for the maintenance of heterochromatic pairings (PubMed:14573476).</text>
</comment>
<comment type="subunit">
    <text evidence="6 9">Interacts with polo (PubMed:18052611). Interacts with cort (PubMed:24019759).</text>
</comment>
<comment type="interaction">
    <interactant intactId="EBI-166563">
        <id>Q23973</id>
    </interactant>
    <interactant intactId="EBI-3423056">
        <id>Q960N3</id>
        <label>cort</label>
    </interactant>
    <organismsDiffer>false</organismsDiffer>
    <experiments>3</experiments>
</comment>
<comment type="interaction">
    <interactant intactId="EBI-166563">
        <id>Q23973</id>
    </interactant>
    <interactant intactId="EBI-163922">
        <id>P52304</id>
        <label>polo</label>
    </interactant>
    <organismsDiffer>false</organismsDiffer>
    <experiments>4</experiments>
</comment>
<comment type="subcellular location">
    <subcellularLocation>
        <location evidence="5">Nucleus</location>
    </subcellularLocation>
    <subcellularLocation>
        <location evidence="5">Chromosome</location>
    </subcellularLocation>
</comment>
<comment type="developmental stage">
    <text evidence="6">Expressed from the end of pachytene until the completion of meiosis I.</text>
</comment>
<comment type="PTM">
    <text evidence="12">Probably ubiquitinated: degraded during the oocyte-to-embryo transition by the anaphase promoting complex/cyclosome (APC/C) containing cort protein.</text>
</comment>
<comment type="disruption phenotype">
    <text evidence="5 6">Mutants exhibit a strong dominant effect on achiasmate segregation, inducing both X and fourth chromosome non-disjunction in females (PubMed:14573476). Precocious nuclear envelope breakdown in oocytes, due to defects in meiotic arrest in G2 (PubMed:18052611).</text>
</comment>
<reference evidence="11" key="1">
    <citation type="submission" date="1993-11" db="EMBL/GenBank/DDBJ databases">
        <authorList>
            <person name="Edgar B."/>
        </authorList>
    </citation>
    <scope>NUCLEOTIDE SEQUENCE [GENOMIC DNA]</scope>
    <source>
        <strain evidence="11">Sevelin</strain>
        <tissue evidence="11">Embryo</tissue>
    </source>
</reference>
<reference key="2">
    <citation type="journal article" date="2009" name="Genetics">
        <title>Molecular population genetics and evolution of Drosophila meiosis genes.</title>
        <authorList>
            <person name="Anderson J.A."/>
            <person name="Gilliland W.D."/>
            <person name="Langley C.H."/>
        </authorList>
    </citation>
    <scope>NUCLEOTIDE SEQUENCE [GENOMIC DNA]</scope>
    <scope>VARIANTS GLN-89 INS; GLN-GLN-89 INS; MET-113 AND THR-190</scope>
    <source>
        <strain>MW11</strain>
        <strain>MW27</strain>
        <strain>MW56</strain>
        <strain>MW6</strain>
        <strain>MW63</strain>
        <strain>NC301</strain>
        <strain>NC303</strain>
        <strain>NC304</strain>
        <strain>NC306</strain>
        <strain>NC319</strain>
        <strain>NC322</strain>
        <strain>NC335</strain>
        <strain>NC336</strain>
        <strain>NC357</strain>
        <strain>NC358</strain>
        <strain>NC359</strain>
        <strain>NC361</strain>
        <strain>NC362</strain>
        <strain>NC390</strain>
        <strain>NC397</strain>
        <strain>NC399</strain>
        <strain>NC732</strain>
        <strain>NC740</strain>
        <strain>NC774</strain>
    </source>
</reference>
<reference evidence="11" key="3">
    <citation type="journal article" date="2000" name="Science">
        <title>The genome sequence of Drosophila melanogaster.</title>
        <authorList>
            <person name="Adams M.D."/>
            <person name="Celniker S.E."/>
            <person name="Holt R.A."/>
            <person name="Evans C.A."/>
            <person name="Gocayne J.D."/>
            <person name="Amanatides P.G."/>
            <person name="Scherer S.E."/>
            <person name="Li P.W."/>
            <person name="Hoskins R.A."/>
            <person name="Galle R.F."/>
            <person name="George R.A."/>
            <person name="Lewis S.E."/>
            <person name="Richards S."/>
            <person name="Ashburner M."/>
            <person name="Henderson S.N."/>
            <person name="Sutton G.G."/>
            <person name="Wortman J.R."/>
            <person name="Yandell M.D."/>
            <person name="Zhang Q."/>
            <person name="Chen L.X."/>
            <person name="Brandon R.C."/>
            <person name="Rogers Y.-H.C."/>
            <person name="Blazej R.G."/>
            <person name="Champe M."/>
            <person name="Pfeiffer B.D."/>
            <person name="Wan K.H."/>
            <person name="Doyle C."/>
            <person name="Baxter E.G."/>
            <person name="Helt G."/>
            <person name="Nelson C.R."/>
            <person name="Miklos G.L.G."/>
            <person name="Abril J.F."/>
            <person name="Agbayani A."/>
            <person name="An H.-J."/>
            <person name="Andrews-Pfannkoch C."/>
            <person name="Baldwin D."/>
            <person name="Ballew R.M."/>
            <person name="Basu A."/>
            <person name="Baxendale J."/>
            <person name="Bayraktaroglu L."/>
            <person name="Beasley E.M."/>
            <person name="Beeson K.Y."/>
            <person name="Benos P.V."/>
            <person name="Berman B.P."/>
            <person name="Bhandari D."/>
            <person name="Bolshakov S."/>
            <person name="Borkova D."/>
            <person name="Botchan M.R."/>
            <person name="Bouck J."/>
            <person name="Brokstein P."/>
            <person name="Brottier P."/>
            <person name="Burtis K.C."/>
            <person name="Busam D.A."/>
            <person name="Butler H."/>
            <person name="Cadieu E."/>
            <person name="Center A."/>
            <person name="Chandra I."/>
            <person name="Cherry J.M."/>
            <person name="Cawley S."/>
            <person name="Dahlke C."/>
            <person name="Davenport L.B."/>
            <person name="Davies P."/>
            <person name="de Pablos B."/>
            <person name="Delcher A."/>
            <person name="Deng Z."/>
            <person name="Mays A.D."/>
            <person name="Dew I."/>
            <person name="Dietz S.M."/>
            <person name="Dodson K."/>
            <person name="Doup L.E."/>
            <person name="Downes M."/>
            <person name="Dugan-Rocha S."/>
            <person name="Dunkov B.C."/>
            <person name="Dunn P."/>
            <person name="Durbin K.J."/>
            <person name="Evangelista C.C."/>
            <person name="Ferraz C."/>
            <person name="Ferriera S."/>
            <person name="Fleischmann W."/>
            <person name="Fosler C."/>
            <person name="Gabrielian A.E."/>
            <person name="Garg N.S."/>
            <person name="Gelbart W.M."/>
            <person name="Glasser K."/>
            <person name="Glodek A."/>
            <person name="Gong F."/>
            <person name="Gorrell J.H."/>
            <person name="Gu Z."/>
            <person name="Guan P."/>
            <person name="Harris M."/>
            <person name="Harris N.L."/>
            <person name="Harvey D.A."/>
            <person name="Heiman T.J."/>
            <person name="Hernandez J.R."/>
            <person name="Houck J."/>
            <person name="Hostin D."/>
            <person name="Houston K.A."/>
            <person name="Howland T.J."/>
            <person name="Wei M.-H."/>
            <person name="Ibegwam C."/>
            <person name="Jalali M."/>
            <person name="Kalush F."/>
            <person name="Karpen G.H."/>
            <person name="Ke Z."/>
            <person name="Kennison J.A."/>
            <person name="Ketchum K.A."/>
            <person name="Kimmel B.E."/>
            <person name="Kodira C.D."/>
            <person name="Kraft C.L."/>
            <person name="Kravitz S."/>
            <person name="Kulp D."/>
            <person name="Lai Z."/>
            <person name="Lasko P."/>
            <person name="Lei Y."/>
            <person name="Levitsky A.A."/>
            <person name="Li J.H."/>
            <person name="Li Z."/>
            <person name="Liang Y."/>
            <person name="Lin X."/>
            <person name="Liu X."/>
            <person name="Mattei B."/>
            <person name="McIntosh T.C."/>
            <person name="McLeod M.P."/>
            <person name="McPherson D."/>
            <person name="Merkulov G."/>
            <person name="Milshina N.V."/>
            <person name="Mobarry C."/>
            <person name="Morris J."/>
            <person name="Moshrefi A."/>
            <person name="Mount S.M."/>
            <person name="Moy M."/>
            <person name="Murphy B."/>
            <person name="Murphy L."/>
            <person name="Muzny D.M."/>
            <person name="Nelson D.L."/>
            <person name="Nelson D.R."/>
            <person name="Nelson K.A."/>
            <person name="Nixon K."/>
            <person name="Nusskern D.R."/>
            <person name="Pacleb J.M."/>
            <person name="Palazzolo M."/>
            <person name="Pittman G.S."/>
            <person name="Pan S."/>
            <person name="Pollard J."/>
            <person name="Puri V."/>
            <person name="Reese M.G."/>
            <person name="Reinert K."/>
            <person name="Remington K."/>
            <person name="Saunders R.D.C."/>
            <person name="Scheeler F."/>
            <person name="Shen H."/>
            <person name="Shue B.C."/>
            <person name="Siden-Kiamos I."/>
            <person name="Simpson M."/>
            <person name="Skupski M.P."/>
            <person name="Smith T.J."/>
            <person name="Spier E."/>
            <person name="Spradling A.C."/>
            <person name="Stapleton M."/>
            <person name="Strong R."/>
            <person name="Sun E."/>
            <person name="Svirskas R."/>
            <person name="Tector C."/>
            <person name="Turner R."/>
            <person name="Venter E."/>
            <person name="Wang A.H."/>
            <person name="Wang X."/>
            <person name="Wang Z.-Y."/>
            <person name="Wassarman D.A."/>
            <person name="Weinstock G.M."/>
            <person name="Weissenbach J."/>
            <person name="Williams S.M."/>
            <person name="Woodage T."/>
            <person name="Worley K.C."/>
            <person name="Wu D."/>
            <person name="Yang S."/>
            <person name="Yao Q.A."/>
            <person name="Ye J."/>
            <person name="Yeh R.-F."/>
            <person name="Zaveri J.S."/>
            <person name="Zhan M."/>
            <person name="Zhang G."/>
            <person name="Zhao Q."/>
            <person name="Zheng L."/>
            <person name="Zheng X.H."/>
            <person name="Zhong F.N."/>
            <person name="Zhong W."/>
            <person name="Zhou X."/>
            <person name="Zhu S.C."/>
            <person name="Zhu X."/>
            <person name="Smith H.O."/>
            <person name="Gibbs R.A."/>
            <person name="Myers E.W."/>
            <person name="Rubin G.M."/>
            <person name="Venter J.C."/>
        </authorList>
    </citation>
    <scope>NUCLEOTIDE SEQUENCE [LARGE SCALE GENOMIC DNA]</scope>
    <source>
        <strain evidence="3">Berkeley</strain>
    </source>
</reference>
<reference key="4">
    <citation type="journal article" date="2002" name="Genome Biol.">
        <title>Annotation of the Drosophila melanogaster euchromatic genome: a systematic review.</title>
        <authorList>
            <person name="Misra S."/>
            <person name="Crosby M.A."/>
            <person name="Mungall C.J."/>
            <person name="Matthews B.B."/>
            <person name="Campbell K.S."/>
            <person name="Hradecky P."/>
            <person name="Huang Y."/>
            <person name="Kaminker J.S."/>
            <person name="Millburn G.H."/>
            <person name="Prochnik S.E."/>
            <person name="Smith C.D."/>
            <person name="Tupy J.L."/>
            <person name="Whitfield E.J."/>
            <person name="Bayraktaroglu L."/>
            <person name="Berman B.P."/>
            <person name="Bettencourt B.R."/>
            <person name="Celniker S.E."/>
            <person name="de Grey A.D.N.J."/>
            <person name="Drysdale R.A."/>
            <person name="Harris N.L."/>
            <person name="Richter J."/>
            <person name="Russo S."/>
            <person name="Schroeder A.J."/>
            <person name="Shu S.Q."/>
            <person name="Stapleton M."/>
            <person name="Yamada C."/>
            <person name="Ashburner M."/>
            <person name="Gelbart W.M."/>
            <person name="Rubin G.M."/>
            <person name="Lewis S.E."/>
        </authorList>
    </citation>
    <scope>GENOME REANNOTATION</scope>
    <source>
        <strain>Berkeley</strain>
    </source>
</reference>
<reference evidence="11" key="5">
    <citation type="journal article" date="2002" name="Genome Biol.">
        <title>A Drosophila full-length cDNA resource.</title>
        <authorList>
            <person name="Stapleton M."/>
            <person name="Carlson J.W."/>
            <person name="Brokstein P."/>
            <person name="Yu C."/>
            <person name="Champe M."/>
            <person name="George R.A."/>
            <person name="Guarin H."/>
            <person name="Kronmiller B."/>
            <person name="Pacleb J.M."/>
            <person name="Park S."/>
            <person name="Wan K.H."/>
            <person name="Rubin G.M."/>
            <person name="Celniker S.E."/>
        </authorList>
    </citation>
    <scope>NUCLEOTIDE SEQUENCE [LARGE SCALE MRNA]</scope>
    <source>
        <strain evidence="4">Berkeley</strain>
        <tissue evidence="4">Embryo</tissue>
    </source>
</reference>
<reference evidence="11" key="6">
    <citation type="submission" date="2004-01" db="EMBL/GenBank/DDBJ databases">
        <authorList>
            <person name="Stapleton M."/>
            <person name="Brokstein P."/>
            <person name="Hong L."/>
            <person name="Agbayani A."/>
            <person name="Carlson J.W."/>
            <person name="Champe M."/>
            <person name="Chavez C."/>
            <person name="Dorsett V."/>
            <person name="Dresnek D."/>
            <person name="Farfan D."/>
            <person name="Frise E."/>
            <person name="George R.A."/>
            <person name="Gonzalez M."/>
            <person name="Guarin H."/>
            <person name="Kronmiller B."/>
            <person name="Li P.W."/>
            <person name="Liao G."/>
            <person name="Miranda A."/>
            <person name="Mungall C.J."/>
            <person name="Nunoo J."/>
            <person name="Pacleb J.M."/>
            <person name="Paragas V."/>
            <person name="Park S."/>
            <person name="Patel S."/>
            <person name="Phouanenavong S."/>
            <person name="Wan K.H."/>
            <person name="Yu C."/>
            <person name="Lewis S.E."/>
            <person name="Rubin G.M."/>
            <person name="Celniker S.E."/>
        </authorList>
    </citation>
    <scope>SEQUENCE REVISION</scope>
</reference>
<reference key="7">
    <citation type="journal article" date="2003" name="Genetics">
        <title>A deficiency screen of the major autosomes identifies a gene (matrimony) that is haplo-insufficient for achiasmate segregation in Drosophila oocytes.</title>
        <authorList>
            <person name="Harris D."/>
            <person name="Orme C."/>
            <person name="Kramer J."/>
            <person name="Namba L."/>
            <person name="Champion M."/>
            <person name="Palladino M.J."/>
            <person name="Natzle J."/>
            <person name="Hawley R.S."/>
        </authorList>
    </citation>
    <scope>FUNCTION</scope>
    <scope>SUBCELLULAR LOCATION</scope>
    <scope>DISRUPTION PHENOTYPE</scope>
</reference>
<reference key="8">
    <citation type="journal article" date="2007" name="PLoS Biol.">
        <title>The inhibition of polo kinase by matrimony maintains G2 arrest in the meiotic cell cycle.</title>
        <authorList>
            <person name="Xiang Y."/>
            <person name="Takeo S."/>
            <person name="Florens L."/>
            <person name="Hughes S.E."/>
            <person name="Huo L.J."/>
            <person name="Gilliland W.D."/>
            <person name="Swanson S.K."/>
            <person name="Teeter K."/>
            <person name="Schwartz J.W."/>
            <person name="Washburn M.P."/>
            <person name="Jaspersen S.L."/>
            <person name="Hawley R.S."/>
        </authorList>
    </citation>
    <scope>FUNCTION</scope>
    <scope>INTERACTION WITH POLO</scope>
    <scope>DISRUPTION PHENOTYPE</scope>
    <scope>DEVELOPMENTAL STAGE</scope>
    <scope>MUTAGENESIS OF THR-40 AND SER-124</scope>
</reference>
<reference key="9">
    <citation type="journal article" date="2008" name="J. Proteome Res.">
        <title>Phosphoproteome analysis of Drosophila melanogaster embryos.</title>
        <authorList>
            <person name="Zhai B."/>
            <person name="Villen J."/>
            <person name="Beausoleil S.A."/>
            <person name="Mintseris J."/>
            <person name="Gygi S.P."/>
        </authorList>
    </citation>
    <scope>PHOSPHORYLATION [LARGE SCALE ANALYSIS] AT SER-63 AND SER-66</scope>
    <scope>IDENTIFICATION BY MASS SPECTROMETRY</scope>
    <source>
        <tissue>Embryo</tissue>
    </source>
</reference>
<reference key="10">
    <citation type="journal article" date="2013" name="PLoS Biol.">
        <title>A meiosis-specific form of the APC/C promotes the oocyte-to-embryo transition by decreasing levels of the Polo kinase inhibitor matrimony.</title>
        <authorList>
            <person name="Whitfield Z.J."/>
            <person name="Chisholm J."/>
            <person name="Hawley R.S."/>
            <person name="Orr-Weaver T.L."/>
        </authorList>
    </citation>
    <scope>DEGRADATION</scope>
    <scope>INTERACTION WITH CORT</scope>
    <scope>MUTAGENESIS OF LEU-21; ARG-95; GLY-170 AND ARG-193</scope>
</reference>
<name>MTRM_DROME</name>
<organism>
    <name type="scientific">Drosophila melanogaster</name>
    <name type="common">Fruit fly</name>
    <dbReference type="NCBI Taxonomy" id="7227"/>
    <lineage>
        <taxon>Eukaryota</taxon>
        <taxon>Metazoa</taxon>
        <taxon>Ecdysozoa</taxon>
        <taxon>Arthropoda</taxon>
        <taxon>Hexapoda</taxon>
        <taxon>Insecta</taxon>
        <taxon>Pterygota</taxon>
        <taxon>Neoptera</taxon>
        <taxon>Endopterygota</taxon>
        <taxon>Diptera</taxon>
        <taxon>Brachycera</taxon>
        <taxon>Muscomorpha</taxon>
        <taxon>Ephydroidea</taxon>
        <taxon>Drosophilidae</taxon>
        <taxon>Drosophila</taxon>
        <taxon>Sophophora</taxon>
    </lineage>
</organism>
<evidence type="ECO:0000255" key="1">
    <source>
        <dbReference type="PROSITE-ProRule" id="PRU00184"/>
    </source>
</evidence>
<evidence type="ECO:0000256" key="2">
    <source>
        <dbReference type="SAM" id="MobiDB-lite"/>
    </source>
</evidence>
<evidence type="ECO:0000269" key="3">
    <source>
    </source>
</evidence>
<evidence type="ECO:0000269" key="4">
    <source>
    </source>
</evidence>
<evidence type="ECO:0000269" key="5">
    <source>
    </source>
</evidence>
<evidence type="ECO:0000269" key="6">
    <source>
    </source>
</evidence>
<evidence type="ECO:0000269" key="7">
    <source>
    </source>
</evidence>
<evidence type="ECO:0000269" key="8">
    <source>
    </source>
</evidence>
<evidence type="ECO:0000269" key="9">
    <source>
    </source>
</evidence>
<evidence type="ECO:0000303" key="10">
    <source>
    </source>
</evidence>
<evidence type="ECO:0000305" key="11"/>
<evidence type="ECO:0000305" key="12">
    <source>
    </source>
</evidence>
<proteinExistence type="evidence at protein level"/>
<sequence>MENSRTPTNKTKITLNRTPTLKERRWNTLKVNTSNVRCSTPIFGNFRSPNLSPIENMGTKGKSPVSPMRFATFKKVPTKVHPKQQQQQQHQHCHRTQLKPPPFVLPKPQEEIIEPEREIKSCSSPDTCSDDSNMETSLALESRRRSIKASNHSYVVNHAANVEQILMHMGLENYVTNFEEAHIDLVELASLERADLVKIGLNTDEDCNRIMDVLHTL</sequence>
<feature type="chain" id="PRO_0000096635" description="Protein matrimony">
    <location>
        <begin position="1"/>
        <end position="217"/>
    </location>
</feature>
<feature type="domain" description="SAM" evidence="1 11">
    <location>
        <begin position="157"/>
        <end position="217"/>
    </location>
</feature>
<feature type="region of interest" description="Disordered" evidence="2">
    <location>
        <begin position="83"/>
        <end position="106"/>
    </location>
</feature>
<feature type="short sequence motif" description="POLO box domain (PBD)-binding" evidence="6">
    <location>
        <begin position="39"/>
        <end position="41"/>
    </location>
</feature>
<feature type="modified residue" description="Phosphoserine" evidence="7">
    <location>
        <position position="63"/>
    </location>
</feature>
<feature type="modified residue" description="Phosphoserine" evidence="7">
    <location>
        <position position="66"/>
    </location>
</feature>
<feature type="sequence variant" description="In strain: NC335, NC390, NC397 and NC774." evidence="8">
    <original>Q</original>
    <variation>QQ</variation>
    <location>
        <position position="89"/>
    </location>
</feature>
<feature type="sequence variant" description="In strain: NC336 and MW6." evidence="8">
    <original>Q</original>
    <variation>QQQ</variation>
    <location>
        <position position="89"/>
    </location>
</feature>
<feature type="sequence variant" description="In strain: MW11." evidence="8">
    <original>I</original>
    <variation>M</variation>
    <location>
        <position position="113"/>
    </location>
</feature>
<feature type="sequence variant" description="In strain: NC303 and NC399." evidence="8">
    <original>S</original>
    <variation>T</variation>
    <location>
        <position position="190"/>
    </location>
</feature>
<feature type="mutagenesis site" description="Decreased degradation during the oocyte-to-embryo transition." evidence="9">
    <original>L</original>
    <variation>A</variation>
    <location>
        <position position="21"/>
    </location>
</feature>
<feature type="mutagenesis site" description="Abolishes interaction with polo and ability to maintain G2 arrest." evidence="6">
    <original>T</original>
    <variation>A</variation>
    <location>
        <position position="40"/>
    </location>
</feature>
<feature type="mutagenesis site" description="No effect on degradation during the oocyte-to-embryo transition; when associated with A-193." evidence="9">
    <original>R</original>
    <variation>A</variation>
    <location>
        <position position="95"/>
    </location>
</feature>
<feature type="mutagenesis site" description="Does not affect interaction with polo." evidence="6">
    <original>S</original>
    <variation>A</variation>
    <location>
        <position position="124"/>
    </location>
</feature>
<feature type="mutagenesis site" description="No effect on degradation during the oocyte-to-embryo transition." evidence="9">
    <original>G</original>
    <variation>A</variation>
    <location>
        <position position="170"/>
    </location>
</feature>
<feature type="mutagenesis site" description="No effect on degradation during the oocyte-to-embryo transition; when associated with A-95." evidence="9">
    <original>R</original>
    <variation>A</variation>
    <location>
        <position position="193"/>
    </location>
</feature>
<feature type="sequence conflict" description="In Ref. 1; AAA03463." evidence="11" ref="1">
    <original>L</original>
    <variation>F</variation>
    <location>
        <position position="98"/>
    </location>
</feature>
<accession>Q23973</accession>
<accession>B6UX71</accession>
<accession>B6UX75</accession>
<accession>B6UX76</accession>
<accession>B6UX77</accession>
<accession>B6UX82</accession>
<accession>B6UX83</accession>
<accession>B6UX94</accession>
<accession>Q9VSJ7</accession>
<gene>
    <name evidence="10" type="primary">mtrm</name>
    <name type="synonym">anon-D52</name>
    <name type="ORF">CG18543</name>
</gene>
<dbReference type="EMBL" id="U03288">
    <property type="protein sequence ID" value="AAA03463.1"/>
    <property type="molecule type" value="Genomic_DNA"/>
</dbReference>
<dbReference type="EMBL" id="FJ219119">
    <property type="protein sequence ID" value="ACI97170.1"/>
    <property type="molecule type" value="Genomic_DNA"/>
</dbReference>
<dbReference type="EMBL" id="FJ219123">
    <property type="protein sequence ID" value="ACI97174.1"/>
    <property type="molecule type" value="Genomic_DNA"/>
</dbReference>
<dbReference type="EMBL" id="FJ219124">
    <property type="protein sequence ID" value="ACI97175.1"/>
    <property type="molecule type" value="Genomic_DNA"/>
</dbReference>
<dbReference type="EMBL" id="FJ219125">
    <property type="protein sequence ID" value="ACI97176.1"/>
    <property type="molecule type" value="Genomic_DNA"/>
</dbReference>
<dbReference type="EMBL" id="FJ219126">
    <property type="protein sequence ID" value="ACI97177.1"/>
    <property type="molecule type" value="Genomic_DNA"/>
</dbReference>
<dbReference type="EMBL" id="FJ219127">
    <property type="protein sequence ID" value="ACI97178.1"/>
    <property type="molecule type" value="Genomic_DNA"/>
</dbReference>
<dbReference type="EMBL" id="FJ219128">
    <property type="protein sequence ID" value="ACI97179.1"/>
    <property type="molecule type" value="Genomic_DNA"/>
</dbReference>
<dbReference type="EMBL" id="FJ219129">
    <property type="protein sequence ID" value="ACI97180.1"/>
    <property type="molecule type" value="Genomic_DNA"/>
</dbReference>
<dbReference type="EMBL" id="FJ219130">
    <property type="protein sequence ID" value="ACI97181.1"/>
    <property type="molecule type" value="Genomic_DNA"/>
</dbReference>
<dbReference type="EMBL" id="FJ219131">
    <property type="protein sequence ID" value="ACI97182.1"/>
    <property type="molecule type" value="Genomic_DNA"/>
</dbReference>
<dbReference type="EMBL" id="FJ219132">
    <property type="protein sequence ID" value="ACI97183.1"/>
    <property type="molecule type" value="Genomic_DNA"/>
</dbReference>
<dbReference type="EMBL" id="FJ219133">
    <property type="protein sequence ID" value="ACI97184.1"/>
    <property type="molecule type" value="Genomic_DNA"/>
</dbReference>
<dbReference type="EMBL" id="FJ219134">
    <property type="protein sequence ID" value="ACI97185.1"/>
    <property type="molecule type" value="Genomic_DNA"/>
</dbReference>
<dbReference type="EMBL" id="FJ219135">
    <property type="protein sequence ID" value="ACI97186.1"/>
    <property type="molecule type" value="Genomic_DNA"/>
</dbReference>
<dbReference type="EMBL" id="FJ219136">
    <property type="protein sequence ID" value="ACI97187.1"/>
    <property type="molecule type" value="Genomic_DNA"/>
</dbReference>
<dbReference type="EMBL" id="FJ219137">
    <property type="protein sequence ID" value="ACI97188.1"/>
    <property type="molecule type" value="Genomic_DNA"/>
</dbReference>
<dbReference type="EMBL" id="FJ219138">
    <property type="protein sequence ID" value="ACI97189.1"/>
    <property type="molecule type" value="Genomic_DNA"/>
</dbReference>
<dbReference type="EMBL" id="FJ219139">
    <property type="protein sequence ID" value="ACI97190.1"/>
    <property type="molecule type" value="Genomic_DNA"/>
</dbReference>
<dbReference type="EMBL" id="FJ219140">
    <property type="protein sequence ID" value="ACI97191.1"/>
    <property type="molecule type" value="Genomic_DNA"/>
</dbReference>
<dbReference type="EMBL" id="FJ219141">
    <property type="protein sequence ID" value="ACI97192.1"/>
    <property type="molecule type" value="Genomic_DNA"/>
</dbReference>
<dbReference type="EMBL" id="FJ219142">
    <property type="protein sequence ID" value="ACI97193.1"/>
    <property type="molecule type" value="Genomic_DNA"/>
</dbReference>
<dbReference type="EMBL" id="FJ219143">
    <property type="protein sequence ID" value="ACI97194.1"/>
    <property type="molecule type" value="Genomic_DNA"/>
</dbReference>
<dbReference type="EMBL" id="FJ219144">
    <property type="protein sequence ID" value="ACI97195.1"/>
    <property type="molecule type" value="Genomic_DNA"/>
</dbReference>
<dbReference type="EMBL" id="FJ219145">
    <property type="protein sequence ID" value="ACI97196.1"/>
    <property type="molecule type" value="Genomic_DNA"/>
</dbReference>
<dbReference type="EMBL" id="AE014296">
    <property type="protein sequence ID" value="AAF50422.1"/>
    <property type="molecule type" value="Genomic_DNA"/>
</dbReference>
<dbReference type="EMBL" id="AY061524">
    <property type="protein sequence ID" value="AAL29072.3"/>
    <property type="molecule type" value="mRNA"/>
</dbReference>
<dbReference type="RefSeq" id="NP_648223.1">
    <property type="nucleotide sequence ID" value="NM_139966.3"/>
</dbReference>
<dbReference type="SMR" id="Q23973"/>
<dbReference type="BioGRID" id="64371">
    <property type="interactions" value="9"/>
</dbReference>
<dbReference type="DIP" id="DIP-22904N"/>
<dbReference type="FunCoup" id="Q23973">
    <property type="interactions" value="85"/>
</dbReference>
<dbReference type="IntAct" id="Q23973">
    <property type="interactions" value="2"/>
</dbReference>
<dbReference type="STRING" id="7227.FBpp0076340"/>
<dbReference type="iPTMnet" id="Q23973"/>
<dbReference type="PaxDb" id="7227-FBpp0076340"/>
<dbReference type="DNASU" id="38958"/>
<dbReference type="EnsemblMetazoa" id="FBtr0076613">
    <property type="protein sequence ID" value="FBpp0076340"/>
    <property type="gene ID" value="FBgn0010431"/>
</dbReference>
<dbReference type="GeneID" id="38958"/>
<dbReference type="KEGG" id="dme:Dmel_CG18543"/>
<dbReference type="UCSC" id="CG18543-RA">
    <property type="organism name" value="d. melanogaster"/>
</dbReference>
<dbReference type="AGR" id="FB:FBgn0010431"/>
<dbReference type="CTD" id="38958"/>
<dbReference type="FlyBase" id="FBgn0010431">
    <property type="gene designation" value="mtrm"/>
</dbReference>
<dbReference type="VEuPathDB" id="VectorBase:FBgn0010431"/>
<dbReference type="eggNOG" id="ENOG502RVWY">
    <property type="taxonomic scope" value="Eukaryota"/>
</dbReference>
<dbReference type="HOGENOM" id="CLU_1273428_0_0_1"/>
<dbReference type="InParanoid" id="Q23973"/>
<dbReference type="OMA" id="RNDEDCN"/>
<dbReference type="OrthoDB" id="539213at2759"/>
<dbReference type="PhylomeDB" id="Q23973"/>
<dbReference type="SignaLink" id="Q23973"/>
<dbReference type="BioGRID-ORCS" id="38958">
    <property type="hits" value="0 hits in 1 CRISPR screen"/>
</dbReference>
<dbReference type="GenomeRNAi" id="38958"/>
<dbReference type="PRO" id="PR:Q23973"/>
<dbReference type="Proteomes" id="UP000000803">
    <property type="component" value="Chromosome 3L"/>
</dbReference>
<dbReference type="Bgee" id="FBgn0010431">
    <property type="expression patterns" value="Expressed in secondary oocyte and 45 other cell types or tissues"/>
</dbReference>
<dbReference type="GO" id="GO:0005694">
    <property type="term" value="C:chromosome"/>
    <property type="evidence" value="ECO:0007669"/>
    <property type="project" value="UniProtKB-SubCell"/>
</dbReference>
<dbReference type="GO" id="GO:0005634">
    <property type="term" value="C:nucleus"/>
    <property type="evidence" value="ECO:0000314"/>
    <property type="project" value="FlyBase"/>
</dbReference>
<dbReference type="GO" id="GO:0003677">
    <property type="term" value="F:DNA binding"/>
    <property type="evidence" value="ECO:0007669"/>
    <property type="project" value="UniProtKB-KW"/>
</dbReference>
<dbReference type="GO" id="GO:0032837">
    <property type="term" value="P:distributive segregation"/>
    <property type="evidence" value="ECO:0000315"/>
    <property type="project" value="FlyBase"/>
</dbReference>
<dbReference type="GO" id="GO:0016321">
    <property type="term" value="P:female meiosis chromosome segregation"/>
    <property type="evidence" value="ECO:0000315"/>
    <property type="project" value="FlyBase"/>
</dbReference>
<dbReference type="GO" id="GO:0045143">
    <property type="term" value="P:homologous chromosome segregation"/>
    <property type="evidence" value="ECO:0000315"/>
    <property type="project" value="UniProtKB"/>
</dbReference>
<dbReference type="GO" id="GO:0051445">
    <property type="term" value="P:regulation of meiotic cell cycle"/>
    <property type="evidence" value="ECO:0000315"/>
    <property type="project" value="FlyBase"/>
</dbReference>
<dbReference type="Gene3D" id="1.10.150.50">
    <property type="entry name" value="Transcription Factor, Ets-1"/>
    <property type="match status" value="1"/>
</dbReference>
<dbReference type="InterPro" id="IPR001660">
    <property type="entry name" value="SAM"/>
</dbReference>
<dbReference type="InterPro" id="IPR013761">
    <property type="entry name" value="SAM/pointed_sf"/>
</dbReference>
<dbReference type="SMART" id="SM00454">
    <property type="entry name" value="SAM"/>
    <property type="match status" value="1"/>
</dbReference>
<dbReference type="SUPFAM" id="SSF47769">
    <property type="entry name" value="SAM/Pointed domain"/>
    <property type="match status" value="1"/>
</dbReference>
<dbReference type="PROSITE" id="PS50105">
    <property type="entry name" value="SAM_DOMAIN"/>
    <property type="match status" value="1"/>
</dbReference>
<keyword id="KW-0131">Cell cycle</keyword>
<keyword id="KW-0158">Chromosome</keyword>
<keyword id="KW-0238">DNA-binding</keyword>
<keyword id="KW-0469">Meiosis</keyword>
<keyword id="KW-0539">Nucleus</keyword>
<keyword id="KW-0597">Phosphoprotein</keyword>
<keyword id="KW-1185">Reference proteome</keyword>
<keyword id="KW-0832">Ubl conjugation</keyword>